<gene>
    <name type="primary">APE2</name>
    <name type="synonym">LAP1</name>
    <name type="ordered locus">YKL157W</name>
    <name type="ORF">YKL158W</name>
    <name type="ORF">YKL611</name>
    <name type="ORF">YKL612</name>
</gene>
<name>APE2_YEAST</name>
<evidence type="ECO:0000250" key="1"/>
<evidence type="ECO:0000255" key="2"/>
<evidence type="ECO:0000255" key="3">
    <source>
        <dbReference type="PROSITE-ProRule" id="PRU10095"/>
    </source>
</evidence>
<evidence type="ECO:0000269" key="4">
    <source>
    </source>
</evidence>
<evidence type="ECO:0000305" key="5"/>
<comment type="function">
    <text>Involved in the cellular supply of leucine from externally offered leucine-containing dipeptide substrates.</text>
</comment>
<comment type="cofactor">
    <cofactor evidence="1">
        <name>Zn(2+)</name>
        <dbReference type="ChEBI" id="CHEBI:29105"/>
    </cofactor>
    <text evidence="1">Binds 1 zinc ion per subunit.</text>
</comment>
<comment type="subcellular location">
    <subcellularLocation>
        <location>Periplasm</location>
    </subcellularLocation>
    <subcellularLocation>
        <location>Cytoplasm</location>
    </subcellularLocation>
    <subcellularLocation>
        <location>Mitochondrion</location>
    </subcellularLocation>
</comment>
<comment type="miscellaneous">
    <text evidence="4">Present with 2910 molecules/cell in log phase SD medium.</text>
</comment>
<comment type="similarity">
    <text evidence="5">Belongs to the peptidase M1 family.</text>
</comment>
<comment type="sequence caution" evidence="5">
    <conflict type="erroneous gene model prediction">
        <sequence resource="EMBL-CDS" id="AAS56682"/>
    </conflict>
</comment>
<comment type="sequence caution" evidence="5">
    <conflict type="erroneous gene model prediction">
        <sequence resource="EMBL-CDS" id="CAA45403"/>
    </conflict>
</comment>
<comment type="sequence caution" evidence="5">
    <conflict type="erroneous gene model prediction">
        <sequence resource="EMBL-CDS" id="CAA81496"/>
    </conflict>
</comment>
<comment type="sequence caution" evidence="5">
    <conflict type="erroneous gene model prediction">
        <sequence resource="EMBL-CDS" id="CAA81497"/>
    </conflict>
</comment>
<comment type="sequence caution" evidence="5">
    <conflict type="frameshift">
        <sequence resource="EMBL-CDS" id="CAA81497"/>
    </conflict>
</comment>
<comment type="sequence caution" evidence="5">
    <conflict type="erroneous gene model prediction">
        <sequence resource="EMBL-CDS" id="CAA81999"/>
    </conflict>
</comment>
<comment type="sequence caution" evidence="5">
    <conflict type="frameshift">
        <sequence resource="EMBL-CDS" id="CAA81999"/>
    </conflict>
</comment>
<comment type="sequence caution" evidence="5">
    <conflict type="erroneous gene model prediction">
        <sequence resource="EMBL-CDS" id="CAA82000"/>
    </conflict>
</comment>
<reference key="1">
    <citation type="journal article" date="1994" name="Yeast">
        <title>DNA sequencing of a 36.2 kb fragment located between the FAS1 and LAP loci of chromosome XI of Saccharomyces cerevisiae.</title>
        <authorList>
            <person name="Vandenbol M."/>
            <person name="Bolle P.-A."/>
            <person name="Dion C."/>
            <person name="Portetelle D."/>
            <person name="Hilger F."/>
        </authorList>
    </citation>
    <scope>NUCLEOTIDE SEQUENCE [GENOMIC DNA]</scope>
    <source>
        <strain>ATCC 204508 / S288c</strain>
    </source>
</reference>
<reference key="2">
    <citation type="journal article" date="1994" name="Nature">
        <title>Complete DNA sequence of yeast chromosome XI.</title>
        <authorList>
            <person name="Dujon B."/>
            <person name="Alexandraki D."/>
            <person name="Andre B."/>
            <person name="Ansorge W."/>
            <person name="Baladron V."/>
            <person name="Ballesta J.P.G."/>
            <person name="Banrevi A."/>
            <person name="Bolle P.-A."/>
            <person name="Bolotin-Fukuhara M."/>
            <person name="Bossier P."/>
            <person name="Bou G."/>
            <person name="Boyer J."/>
            <person name="Buitrago M.J."/>
            <person name="Cheret G."/>
            <person name="Colleaux L."/>
            <person name="Daignan-Fornier B."/>
            <person name="del Rey F."/>
            <person name="Dion C."/>
            <person name="Domdey H."/>
            <person name="Duesterhoeft A."/>
            <person name="Duesterhus S."/>
            <person name="Entian K.-D."/>
            <person name="Erfle H."/>
            <person name="Esteban P.F."/>
            <person name="Feldmann H."/>
            <person name="Fernandes L."/>
            <person name="Fobo G.M."/>
            <person name="Fritz C."/>
            <person name="Fukuhara H."/>
            <person name="Gabel C."/>
            <person name="Gaillon L."/>
            <person name="Garcia-Cantalejo J.M."/>
            <person name="Garcia-Ramirez J.J."/>
            <person name="Gent M.E."/>
            <person name="Ghazvini M."/>
            <person name="Goffeau A."/>
            <person name="Gonzalez A."/>
            <person name="Grothues D."/>
            <person name="Guerreiro P."/>
            <person name="Hegemann J.H."/>
            <person name="Hewitt N."/>
            <person name="Hilger F."/>
            <person name="Hollenberg C.P."/>
            <person name="Horaitis O."/>
            <person name="Indge K.J."/>
            <person name="Jacquier A."/>
            <person name="James C.M."/>
            <person name="Jauniaux J.-C."/>
            <person name="Jimenez A."/>
            <person name="Keuchel H."/>
            <person name="Kirchrath L."/>
            <person name="Kleine K."/>
            <person name="Koetter P."/>
            <person name="Legrain P."/>
            <person name="Liebl S."/>
            <person name="Louis E.J."/>
            <person name="Maia e Silva A."/>
            <person name="Marck C."/>
            <person name="Monnier A.-L."/>
            <person name="Moestl D."/>
            <person name="Mueller S."/>
            <person name="Obermaier B."/>
            <person name="Oliver S.G."/>
            <person name="Pallier C."/>
            <person name="Pascolo S."/>
            <person name="Pfeiffer F."/>
            <person name="Philippsen P."/>
            <person name="Planta R.J."/>
            <person name="Pohl F.M."/>
            <person name="Pohl T.M."/>
            <person name="Poehlmann R."/>
            <person name="Portetelle D."/>
            <person name="Purnelle B."/>
            <person name="Puzos V."/>
            <person name="Ramezani Rad M."/>
            <person name="Rasmussen S.W."/>
            <person name="Remacha M.A."/>
            <person name="Revuelta J.L."/>
            <person name="Richard G.-F."/>
            <person name="Rieger M."/>
            <person name="Rodrigues-Pousada C."/>
            <person name="Rose M."/>
            <person name="Rupp T."/>
            <person name="Santos M.A."/>
            <person name="Schwager C."/>
            <person name="Sensen C."/>
            <person name="Skala J."/>
            <person name="Soares H."/>
            <person name="Sor F."/>
            <person name="Stegemann J."/>
            <person name="Tettelin H."/>
            <person name="Thierry A."/>
            <person name="Tzermia M."/>
            <person name="Urrestarazu L.A."/>
            <person name="van Dyck L."/>
            <person name="van Vliet-Reedijk J.C."/>
            <person name="Valens M."/>
            <person name="Vandenbol M."/>
            <person name="Vilela C."/>
            <person name="Vissers S."/>
            <person name="von Wettstein D."/>
            <person name="Voss H."/>
            <person name="Wiemann S."/>
            <person name="Xu G."/>
            <person name="Zimmermann J."/>
            <person name="Haasemann M."/>
            <person name="Becker I."/>
            <person name="Mewes H.-W."/>
        </authorList>
    </citation>
    <scope>NUCLEOTIDE SEQUENCE [LARGE SCALE GENOMIC DNA]</scope>
    <source>
        <strain>ATCC 204508 / S288c</strain>
    </source>
</reference>
<reference key="3">
    <citation type="journal article" date="2014" name="G3 (Bethesda)">
        <title>The reference genome sequence of Saccharomyces cerevisiae: Then and now.</title>
        <authorList>
            <person name="Engel S.R."/>
            <person name="Dietrich F.S."/>
            <person name="Fisk D.G."/>
            <person name="Binkley G."/>
            <person name="Balakrishnan R."/>
            <person name="Costanzo M.C."/>
            <person name="Dwight S.S."/>
            <person name="Hitz B.C."/>
            <person name="Karra K."/>
            <person name="Nash R.S."/>
            <person name="Weng S."/>
            <person name="Wong E.D."/>
            <person name="Lloyd P."/>
            <person name="Skrzypek M.S."/>
            <person name="Miyasato S.R."/>
            <person name="Simison M."/>
            <person name="Cherry J.M."/>
        </authorList>
    </citation>
    <scope>GENOME REANNOTATION</scope>
    <scope>SEQUENCE REVISION TO 935</scope>
    <source>
        <strain>ATCC 204508 / S288c</strain>
    </source>
</reference>
<reference key="4">
    <citation type="journal article" date="2007" name="Genome Res.">
        <title>Approaching a complete repository of sequence-verified protein-encoding clones for Saccharomyces cerevisiae.</title>
        <authorList>
            <person name="Hu Y."/>
            <person name="Rolfs A."/>
            <person name="Bhullar B."/>
            <person name="Murthy T.V.S."/>
            <person name="Zhu C."/>
            <person name="Berger M.F."/>
            <person name="Camargo A.A."/>
            <person name="Kelley F."/>
            <person name="McCarron S."/>
            <person name="Jepson D."/>
            <person name="Richardson A."/>
            <person name="Raphael J."/>
            <person name="Moreira D."/>
            <person name="Taycher E."/>
            <person name="Zuo D."/>
            <person name="Mohr S."/>
            <person name="Kane M.F."/>
            <person name="Williamson J."/>
            <person name="Simpson A.J.G."/>
            <person name="Bulyk M.L."/>
            <person name="Harlow E."/>
            <person name="Marsischky G."/>
            <person name="Kolodner R.D."/>
            <person name="LaBaer J."/>
        </authorList>
    </citation>
    <scope>NUCLEOTIDE SEQUENCE [GENOMIC DNA] OF 1-93</scope>
    <source>
        <strain>ATCC 204508 / S288c</strain>
    </source>
</reference>
<reference key="5">
    <citation type="journal article" date="1991" name="Eur. J. Biochem.">
        <title>Molecular cloning of soluble aminopeptidases from Saccharomyces cerevisiae. Sequence analysis of aminopeptidase yscII, a putative zinc-metallopeptidase.</title>
        <authorList>
            <person name="Garcia-Alvarez N."/>
            <person name="Cueva R."/>
            <person name="Suarez-Rendueles P."/>
        </authorList>
    </citation>
    <scope>NUCLEOTIDE SEQUENCE [GENOMIC DNA] OF 35-952</scope>
    <source>
        <strain>ATCC 204510 / AB320</strain>
    </source>
</reference>
<reference key="6">
    <citation type="journal article" date="1979" name="Eur. J. Biochem.">
        <title>External and internal forms of yeast aminopeptidase II.</title>
        <authorList>
            <person name="Frey J."/>
            <person name="Roehm K.-H."/>
        </authorList>
    </citation>
    <scope>SUBCELLULAR LOCATION</scope>
</reference>
<reference key="7">
    <citation type="journal article" date="2000" name="Nucleic Acids Res.">
        <title>Test of intron predictions reveals novel splice sites, alternatively spliced mRNAs and new introns in meiotically regulated genes of yeast.</title>
        <authorList>
            <person name="Davis C.A."/>
            <person name="Grate L."/>
            <person name="Spingola M."/>
            <person name="Ares M. Jr."/>
        </authorList>
    </citation>
    <scope>IDENTIFICATION OF INTRON</scope>
</reference>
<reference key="8">
    <citation type="journal article" date="2003" name="Proc. Natl. Acad. Sci. U.S.A.">
        <title>The proteome of Saccharomyces cerevisiae mitochondria.</title>
        <authorList>
            <person name="Sickmann A."/>
            <person name="Reinders J."/>
            <person name="Wagner Y."/>
            <person name="Joppich C."/>
            <person name="Zahedi R.P."/>
            <person name="Meyer H.E."/>
            <person name="Schoenfisch B."/>
            <person name="Perschil I."/>
            <person name="Chacinska A."/>
            <person name="Guiard B."/>
            <person name="Rehling P."/>
            <person name="Pfanner N."/>
            <person name="Meisinger C."/>
        </authorList>
    </citation>
    <scope>SUBCELLULAR LOCATION [LARGE SCALE ANALYSIS]</scope>
    <source>
        <strain>ATCC 76625 / YPH499</strain>
    </source>
</reference>
<reference key="9">
    <citation type="journal article" date="2003" name="Nature">
        <title>Global analysis of protein localization in budding yeast.</title>
        <authorList>
            <person name="Huh W.-K."/>
            <person name="Falvo J.V."/>
            <person name="Gerke L.C."/>
            <person name="Carroll A.S."/>
            <person name="Howson R.W."/>
            <person name="Weissman J.S."/>
            <person name="O'Shea E.K."/>
        </authorList>
    </citation>
    <scope>SUBCELLULAR LOCATION [LARGE SCALE ANALYSIS]</scope>
</reference>
<reference key="10">
    <citation type="journal article" date="2003" name="Nature">
        <title>Global analysis of protein expression in yeast.</title>
        <authorList>
            <person name="Ghaemmaghami S."/>
            <person name="Huh W.-K."/>
            <person name="Bower K."/>
            <person name="Howson R.W."/>
            <person name="Belle A."/>
            <person name="Dephoure N."/>
            <person name="O'Shea E.K."/>
            <person name="Weissman J.S."/>
        </authorList>
    </citation>
    <scope>LEVEL OF PROTEIN EXPRESSION [LARGE SCALE ANALYSIS]</scope>
</reference>
<reference key="11">
    <citation type="journal article" date="2004" name="J. Biol. Chem.">
        <title>The yeast mitochondrial proteome, a study of fermentative and respiratory growth.</title>
        <authorList>
            <person name="Ohlmeier S."/>
            <person name="Kastaniotis A.J."/>
            <person name="Hiltunen J.K."/>
            <person name="Bergmann U."/>
        </authorList>
    </citation>
    <scope>SUBCELLULAR LOCATION</scope>
    <scope>IDENTIFICATION BY MASS SPECTROMETRY</scope>
</reference>
<reference key="12">
    <citation type="journal article" date="2008" name="Mol. Cell. Proteomics">
        <title>A multidimensional chromatography technology for in-depth phosphoproteome analysis.</title>
        <authorList>
            <person name="Albuquerque C.P."/>
            <person name="Smolka M.B."/>
            <person name="Payne S.H."/>
            <person name="Bafna V."/>
            <person name="Eng J."/>
            <person name="Zhou H."/>
        </authorList>
    </citation>
    <scope>IDENTIFICATION BY MASS SPECTROMETRY [LARGE SCALE ANALYSIS]</scope>
</reference>
<protein>
    <recommendedName>
        <fullName>Aminopeptidase 2, mitochondrial</fullName>
        <shortName>AP-II</shortName>
        <shortName>Aminopeptidase II</shortName>
        <ecNumber>3.4.11.-</ecNumber>
    </recommendedName>
    <alternativeName>
        <fullName>YscII</fullName>
    </alternativeName>
</protein>
<organism>
    <name type="scientific">Saccharomyces cerevisiae (strain ATCC 204508 / S288c)</name>
    <name type="common">Baker's yeast</name>
    <dbReference type="NCBI Taxonomy" id="559292"/>
    <lineage>
        <taxon>Eukaryota</taxon>
        <taxon>Fungi</taxon>
        <taxon>Dikarya</taxon>
        <taxon>Ascomycota</taxon>
        <taxon>Saccharomycotina</taxon>
        <taxon>Saccharomycetes</taxon>
        <taxon>Saccharomycetales</taxon>
        <taxon>Saccharomycetaceae</taxon>
        <taxon>Saccharomyces</taxon>
    </lineage>
</organism>
<accession>P32454</accession>
<accession>D6VX41</accession>
<accession>P36055</accession>
<proteinExistence type="evidence at protein level"/>
<dbReference type="EC" id="3.4.11.-"/>
<dbReference type="EMBL" id="Z26877">
    <property type="protein sequence ID" value="CAA81496.1"/>
    <property type="status" value="ALT_SEQ"/>
    <property type="molecule type" value="Genomic_DNA"/>
</dbReference>
<dbReference type="EMBL" id="Z26877">
    <property type="protein sequence ID" value="CAA81497.1"/>
    <property type="status" value="ALT_SEQ"/>
    <property type="molecule type" value="Genomic_DNA"/>
</dbReference>
<dbReference type="EMBL" id="Z28157">
    <property type="protein sequence ID" value="CAA81999.1"/>
    <property type="status" value="ALT_SEQ"/>
    <property type="molecule type" value="Genomic_DNA"/>
</dbReference>
<dbReference type="EMBL" id="Z28158">
    <property type="protein sequence ID" value="CAA82000.1"/>
    <property type="status" value="ALT_SEQ"/>
    <property type="molecule type" value="Genomic_DNA"/>
</dbReference>
<dbReference type="EMBL" id="AY558356">
    <property type="protein sequence ID" value="AAS56682.1"/>
    <property type="status" value="ALT_SEQ"/>
    <property type="molecule type" value="Genomic_DNA"/>
</dbReference>
<dbReference type="EMBL" id="X63998">
    <property type="protein sequence ID" value="CAA45403.1"/>
    <property type="status" value="ALT_SEQ"/>
    <property type="molecule type" value="Genomic_DNA"/>
</dbReference>
<dbReference type="EMBL" id="BK006944">
    <property type="protein sequence ID" value="DAA09007.2"/>
    <property type="molecule type" value="Genomic_DNA"/>
</dbReference>
<dbReference type="PIR" id="S37793">
    <property type="entry name" value="S37793"/>
</dbReference>
<dbReference type="PIR" id="S37794">
    <property type="entry name" value="S37794"/>
</dbReference>
<dbReference type="RefSeq" id="NP_012765.3">
    <property type="nucleotide sequence ID" value="NM_001179723.2"/>
</dbReference>
<dbReference type="SMR" id="P32454"/>
<dbReference type="BioGRID" id="33980">
    <property type="interactions" value="173"/>
</dbReference>
<dbReference type="DIP" id="DIP-4391N"/>
<dbReference type="FunCoup" id="P32454">
    <property type="interactions" value="1104"/>
</dbReference>
<dbReference type="IntAct" id="P32454">
    <property type="interactions" value="58"/>
</dbReference>
<dbReference type="MINT" id="P32454"/>
<dbReference type="STRING" id="4932.YKL157W"/>
<dbReference type="MEROPS" id="M01.006"/>
<dbReference type="GlyCosmos" id="P32454">
    <property type="glycosylation" value="2 sites, No reported glycans"/>
</dbReference>
<dbReference type="GlyGen" id="P32454">
    <property type="glycosylation" value="5 sites, 1 O-linked glycan (2 sites)"/>
</dbReference>
<dbReference type="iPTMnet" id="P32454"/>
<dbReference type="PaxDb" id="4932-YKL157W"/>
<dbReference type="PeptideAtlas" id="P32454"/>
<dbReference type="EnsemblFungi" id="YKL157W_mRNA">
    <property type="protein sequence ID" value="YKL157W"/>
    <property type="gene ID" value="YKL157W"/>
</dbReference>
<dbReference type="GeneID" id="853699"/>
<dbReference type="KEGG" id="sce:YKL157W"/>
<dbReference type="AGR" id="SGD:S000001640"/>
<dbReference type="SGD" id="S000001640">
    <property type="gene designation" value="APE2"/>
</dbReference>
<dbReference type="VEuPathDB" id="FungiDB:YKL157W"/>
<dbReference type="eggNOG" id="KOG1046">
    <property type="taxonomic scope" value="Eukaryota"/>
</dbReference>
<dbReference type="GeneTree" id="ENSGT00940000155246"/>
<dbReference type="HOGENOM" id="CLU_003705_0_1_1"/>
<dbReference type="InParanoid" id="P32454"/>
<dbReference type="OMA" id="MMEYVAI"/>
<dbReference type="OrthoDB" id="10031169at2759"/>
<dbReference type="BioCyc" id="YEAST:YKL157W-MONOMER"/>
<dbReference type="Reactome" id="R-SCE-983168">
    <property type="pathway name" value="Antigen processing: Ubiquitination &amp; Proteasome degradation"/>
</dbReference>
<dbReference type="BioGRID-ORCS" id="853699">
    <property type="hits" value="0 hits in 10 CRISPR screens"/>
</dbReference>
<dbReference type="PRO" id="PR:P32454"/>
<dbReference type="Proteomes" id="UP000002311">
    <property type="component" value="Chromosome XI"/>
</dbReference>
<dbReference type="RNAct" id="P32454">
    <property type="molecule type" value="protein"/>
</dbReference>
<dbReference type="GO" id="GO:0030287">
    <property type="term" value="C:cell wall-bounded periplasmic space"/>
    <property type="evidence" value="ECO:0000314"/>
    <property type="project" value="SGD"/>
</dbReference>
<dbReference type="GO" id="GO:0005737">
    <property type="term" value="C:cytoplasm"/>
    <property type="evidence" value="ECO:0000318"/>
    <property type="project" value="GO_Central"/>
</dbReference>
<dbReference type="GO" id="GO:0005576">
    <property type="term" value="C:extracellular region"/>
    <property type="evidence" value="ECO:0000314"/>
    <property type="project" value="SGD"/>
</dbReference>
<dbReference type="GO" id="GO:0005615">
    <property type="term" value="C:extracellular space"/>
    <property type="evidence" value="ECO:0000318"/>
    <property type="project" value="GO_Central"/>
</dbReference>
<dbReference type="GO" id="GO:0016020">
    <property type="term" value="C:membrane"/>
    <property type="evidence" value="ECO:0000318"/>
    <property type="project" value="GO_Central"/>
</dbReference>
<dbReference type="GO" id="GO:0005739">
    <property type="term" value="C:mitochondrion"/>
    <property type="evidence" value="ECO:0007005"/>
    <property type="project" value="SGD"/>
</dbReference>
<dbReference type="GO" id="GO:0005634">
    <property type="term" value="C:nucleus"/>
    <property type="evidence" value="ECO:0007005"/>
    <property type="project" value="SGD"/>
</dbReference>
<dbReference type="GO" id="GO:0070006">
    <property type="term" value="F:metalloaminopeptidase activity"/>
    <property type="evidence" value="ECO:0000314"/>
    <property type="project" value="SGD"/>
</dbReference>
<dbReference type="GO" id="GO:0042277">
    <property type="term" value="F:peptide binding"/>
    <property type="evidence" value="ECO:0000318"/>
    <property type="project" value="GO_Central"/>
</dbReference>
<dbReference type="GO" id="GO:0008270">
    <property type="term" value="F:zinc ion binding"/>
    <property type="evidence" value="ECO:0000318"/>
    <property type="project" value="GO_Central"/>
</dbReference>
<dbReference type="GO" id="GO:0043171">
    <property type="term" value="P:peptide catabolic process"/>
    <property type="evidence" value="ECO:0000314"/>
    <property type="project" value="SGD"/>
</dbReference>
<dbReference type="GO" id="GO:0006508">
    <property type="term" value="P:proteolysis"/>
    <property type="evidence" value="ECO:0000318"/>
    <property type="project" value="GO_Central"/>
</dbReference>
<dbReference type="CDD" id="cd09601">
    <property type="entry name" value="M1_APN-Q_like"/>
    <property type="match status" value="1"/>
</dbReference>
<dbReference type="FunFam" id="1.10.390.10:FF:000001">
    <property type="entry name" value="Aminopeptidase"/>
    <property type="match status" value="1"/>
</dbReference>
<dbReference type="FunFam" id="1.25.50.20:FF:000002">
    <property type="entry name" value="Aminopeptidase"/>
    <property type="match status" value="1"/>
</dbReference>
<dbReference type="FunFam" id="2.60.40.1730:FF:000002">
    <property type="entry name" value="Aminopeptidase"/>
    <property type="match status" value="1"/>
</dbReference>
<dbReference type="FunFam" id="2.60.40.1910:FF:000004">
    <property type="entry name" value="Aminopeptidase"/>
    <property type="match status" value="1"/>
</dbReference>
<dbReference type="Gene3D" id="1.25.50.20">
    <property type="match status" value="1"/>
</dbReference>
<dbReference type="Gene3D" id="2.60.40.1910">
    <property type="match status" value="1"/>
</dbReference>
<dbReference type="Gene3D" id="1.10.390.10">
    <property type="entry name" value="Neutral Protease Domain 2"/>
    <property type="match status" value="1"/>
</dbReference>
<dbReference type="Gene3D" id="2.60.40.1730">
    <property type="entry name" value="tricorn interacting facor f3 domain"/>
    <property type="match status" value="1"/>
</dbReference>
<dbReference type="InterPro" id="IPR045357">
    <property type="entry name" value="Aminopeptidase_N-like_N"/>
</dbReference>
<dbReference type="InterPro" id="IPR042097">
    <property type="entry name" value="Aminopeptidase_N-like_N_sf"/>
</dbReference>
<dbReference type="InterPro" id="IPR024571">
    <property type="entry name" value="ERAP1-like_C_dom"/>
</dbReference>
<dbReference type="InterPro" id="IPR034016">
    <property type="entry name" value="M1_APN-typ"/>
</dbReference>
<dbReference type="InterPro" id="IPR001930">
    <property type="entry name" value="Peptidase_M1"/>
</dbReference>
<dbReference type="InterPro" id="IPR050344">
    <property type="entry name" value="Peptidase_M1_aminopeptidases"/>
</dbReference>
<dbReference type="InterPro" id="IPR014782">
    <property type="entry name" value="Peptidase_M1_dom"/>
</dbReference>
<dbReference type="InterPro" id="IPR027268">
    <property type="entry name" value="Peptidase_M4/M1_CTD_sf"/>
</dbReference>
<dbReference type="PANTHER" id="PTHR11533">
    <property type="entry name" value="PROTEASE M1 ZINC METALLOPROTEASE"/>
    <property type="match status" value="1"/>
</dbReference>
<dbReference type="PANTHER" id="PTHR11533:SF174">
    <property type="entry name" value="PUROMYCIN-SENSITIVE AMINOPEPTIDASE-RELATED"/>
    <property type="match status" value="1"/>
</dbReference>
<dbReference type="Pfam" id="PF11838">
    <property type="entry name" value="ERAP1_C"/>
    <property type="match status" value="1"/>
</dbReference>
<dbReference type="Pfam" id="PF01433">
    <property type="entry name" value="Peptidase_M1"/>
    <property type="match status" value="1"/>
</dbReference>
<dbReference type="Pfam" id="PF17900">
    <property type="entry name" value="Peptidase_M1_N"/>
    <property type="match status" value="1"/>
</dbReference>
<dbReference type="PRINTS" id="PR00756">
    <property type="entry name" value="ALADIPTASE"/>
</dbReference>
<dbReference type="SUPFAM" id="SSF63737">
    <property type="entry name" value="Leukotriene A4 hydrolase N-terminal domain"/>
    <property type="match status" value="1"/>
</dbReference>
<dbReference type="SUPFAM" id="SSF55486">
    <property type="entry name" value="Metalloproteases ('zincins'), catalytic domain"/>
    <property type="match status" value="1"/>
</dbReference>
<dbReference type="PROSITE" id="PS00142">
    <property type="entry name" value="ZINC_PROTEASE"/>
    <property type="match status" value="1"/>
</dbReference>
<feature type="transit peptide" description="Mitochondrion" evidence="2">
    <location>
        <begin position="1"/>
        <end position="52"/>
    </location>
</feature>
<feature type="chain" id="PRO_0000095104" description="Aminopeptidase 2, mitochondrial">
    <location>
        <begin position="53"/>
        <end position="952"/>
    </location>
</feature>
<feature type="active site" description="Proton acceptor" evidence="3">
    <location>
        <position position="397"/>
    </location>
</feature>
<feature type="binding site" evidence="1">
    <location>
        <position position="228"/>
    </location>
    <ligand>
        <name>substrate</name>
    </ligand>
</feature>
<feature type="binding site" evidence="1">
    <location>
        <begin position="360"/>
        <end position="364"/>
    </location>
    <ligand>
        <name>substrate</name>
    </ligand>
</feature>
<feature type="binding site" evidence="3">
    <location>
        <position position="396"/>
    </location>
    <ligand>
        <name>Zn(2+)</name>
        <dbReference type="ChEBI" id="CHEBI:29105"/>
        <note>catalytic</note>
    </ligand>
</feature>
<feature type="binding site" evidence="3">
    <location>
        <position position="400"/>
    </location>
    <ligand>
        <name>Zn(2+)</name>
        <dbReference type="ChEBI" id="CHEBI:29105"/>
        <note>catalytic</note>
    </ligand>
</feature>
<feature type="binding site" evidence="3">
    <location>
        <position position="419"/>
    </location>
    <ligand>
        <name>Zn(2+)</name>
        <dbReference type="ChEBI" id="CHEBI:29105"/>
        <note>catalytic</note>
    </ligand>
</feature>
<feature type="site" description="Transition state stabilizer" evidence="1">
    <location>
        <position position="482"/>
    </location>
</feature>
<feature type="glycosylation site" description="N-linked (GlcNAc...) asparagine" evidence="2">
    <location>
        <position position="381"/>
    </location>
</feature>
<feature type="glycosylation site" description="N-linked (GlcNAc...) asparagine" evidence="2">
    <location>
        <position position="713"/>
    </location>
</feature>
<feature type="sequence conflict" description="In Ref. 5; CAA45403." evidence="5" ref="5">
    <original>R</original>
    <variation>A</variation>
    <location>
        <position position="73"/>
    </location>
</feature>
<feature type="sequence conflict" description="In Ref. 5; CAA45403." evidence="5" ref="5">
    <original>LL</original>
    <variation>FI</variation>
    <location>
        <begin position="92"/>
        <end position="93"/>
    </location>
</feature>
<feature type="sequence conflict" description="In Ref. 5; CAA45403." evidence="5" ref="5">
    <original>D</original>
    <variation>V</variation>
    <location>
        <position position="255"/>
    </location>
</feature>
<feature type="sequence conflict" description="In Ref. 5; CAA45403." evidence="5" ref="5">
    <original>D</original>
    <variation>E</variation>
    <location>
        <position position="533"/>
    </location>
</feature>
<sequence>MPIVRWLLLKSAVRGSSLIGKAHPCLRSIAAHPRYLSNVYSPPAGVSRSLRINVMWKQSKLTPPRFVKIMNRRPLFTETSHACAKCQKTSQLLNKTPNREILPDNVVPLHYDLTVEPDFKTFKFEGSVKIELKINNPAIDTVTLNTVDTDIHSAKIGDVTSSEIISEEEQQVTTFAFPKGTMSSFKGNAFLDIKFTGILNDNMAGFYRAKYEDKLTGETKYMATTQMEPTDARRAFPCFDEPNLKASFAITLVSDPSLTHLSNMDVKNEYVKDGKKVTLFNTTPKMSTYLVAFIVAELKYVESKNFRIPVRVYATPGNEKHGQFAADLTAKTLAFFEKTFGIQYPLPKMDNVAVHEFSAGAMENWGLVTYRVVDLLLDKDNSTLDRIQRVAEVVQHELAHQWFGNLVTMDWWEGLWLNEGFATWMSWYSCNEFQPEWKVWEQYVTDTLQHALSLDSLRSSHPIEVPVKKADEINQIFDAISYSKGASLLRMISKWLGEETFIKGVSQYLNKFKYGNAKTEDLWDALADASGKDVRSVMNIWTKKVGFPVISVSEDGNGKITFRQNRYLSTADVKPDEDKTIYPVFLALKTKNGVDSSVVLSERSKTIELEDPTFFKVNSEQSGIYITSYTDERWAKLGQQADLLSVEDRVGLVADVKTLSASGYTSTTNFLNLVSKWNNEKSFVVWDQIINSISSMKSTWLFEPKETQDALDNFTKQLISGMTHHLGWEFKSSDSFSTQRLKVTMFGAACAARDADVEKAALKMFTDYCSGNKEAIPALIKPIVFNTVARVGGAENYEKVYKIYLDPISNDEKLAALRSLGRFKEPKLLERTLGYLFDGTVLNQDIYIPMQGMRAHQEGVEALWNWVKKNWDELVKRLPPGLSMLGSVVTLGTSGFTSMQKIDEIKKFFATKSTKGFDQSLAQSLDTITSKAQWVNRDRDVVNKYLKENGYY</sequence>
<keyword id="KW-0031">Aminopeptidase</keyword>
<keyword id="KW-0963">Cytoplasm</keyword>
<keyword id="KW-0325">Glycoprotein</keyword>
<keyword id="KW-0378">Hydrolase</keyword>
<keyword id="KW-0479">Metal-binding</keyword>
<keyword id="KW-0482">Metalloprotease</keyword>
<keyword id="KW-0496">Mitochondrion</keyword>
<keyword id="KW-0574">Periplasm</keyword>
<keyword id="KW-0645">Protease</keyword>
<keyword id="KW-1185">Reference proteome</keyword>
<keyword id="KW-0809">Transit peptide</keyword>
<keyword id="KW-0862">Zinc</keyword>